<accession>P83056</accession>
<accession>Q90W86</accession>
<organism>
    <name type="scientific">Bombina variegata</name>
    <name type="common">Yellow-bellied toad</name>
    <dbReference type="NCBI Taxonomy" id="8348"/>
    <lineage>
        <taxon>Eukaryota</taxon>
        <taxon>Metazoa</taxon>
        <taxon>Chordata</taxon>
        <taxon>Craniata</taxon>
        <taxon>Vertebrata</taxon>
        <taxon>Euteleostomi</taxon>
        <taxon>Amphibia</taxon>
        <taxon>Batrachia</taxon>
        <taxon>Anura</taxon>
        <taxon>Bombinatoridae</taxon>
        <taxon>Bombina</taxon>
    </lineage>
</organism>
<sequence>MRLWFCLSFLIILCVEHFPGTLAVERNVPESEEKTEQFLRDLFEISRLQRRPAGFTPFRGKFHSQSLRGLSETKRIYNAIWPCKHCNKCKPGLLCKK</sequence>
<proteinExistence type="evidence at protein level"/>
<keyword id="KW-0878">Amphibian defense peptide</keyword>
<keyword id="KW-0165">Cleavage on pair of basic residues</keyword>
<keyword id="KW-0903">Direct protein sequencing</keyword>
<keyword id="KW-1213">G-protein coupled receptor impairing toxin</keyword>
<keyword id="KW-0677">Repeat</keyword>
<keyword id="KW-0964">Secreted</keyword>
<keyword id="KW-0732">Signal</keyword>
<keyword id="KW-0800">Toxin</keyword>
<keyword id="KW-0838">Vasoactive</keyword>
<keyword id="KW-0840">Vasodilator</keyword>
<evidence type="ECO:0000255" key="1"/>
<evidence type="ECO:0000269" key="2">
    <source>
    </source>
</evidence>
<evidence type="ECO:0000269" key="3">
    <source>
    </source>
</evidence>
<evidence type="ECO:0000305" key="4"/>
<evidence type="ECO:0000312" key="5">
    <source>
        <dbReference type="EMBL" id="CAC44903.1"/>
    </source>
</evidence>
<reference evidence="4 5" key="1">
    <citation type="journal article" date="2002" name="Eur. J. Biochem.">
        <title>Novel bradykinins and their precursor cDNAs from European yellow-bellied toad (Bombina variegata) skin.</title>
        <authorList>
            <person name="Chen T."/>
            <person name="Orr D.F."/>
            <person name="Bjourson A.J."/>
            <person name="McClean S."/>
            <person name="O'Rourke M."/>
            <person name="Hirst D.G."/>
            <person name="Rao P."/>
            <person name="Shaw C."/>
        </authorList>
    </citation>
    <scope>NUCLEOTIDE SEQUENCE [MRNA]</scope>
    <scope>PROTEIN SEQUENCE OF 51-59</scope>
    <scope>FUNCTION</scope>
    <scope>SUBCELLULAR LOCATION</scope>
    <scope>TISSUE SPECIFICITY</scope>
    <scope>MASS SPECTROMETRY</scope>
    <source>
        <tissue evidence="2">Skin</tissue>
        <tissue evidence="2">Skin secretion</tissue>
    </source>
</reference>
<reference evidence="4" key="2">
    <citation type="journal article" date="2004" name="Biol. Chem.">
        <title>Skin secretion of the toad Bombina variegata contains multiple insulin-releasing peptides including bombesin and entirely novel insulinotropic structures.</title>
        <authorList>
            <person name="Marenah L."/>
            <person name="Flatt P.R."/>
            <person name="Orr D.F."/>
            <person name="McClean S."/>
            <person name="Shaw C."/>
            <person name="Abdel-Wahab Y.H."/>
        </authorList>
    </citation>
    <scope>PROTEIN SEQUENCE OF 76-97</scope>
    <scope>FUNCTION</scope>
    <scope>SUBCELLULAR LOCATION</scope>
    <scope>TISSUE SPECIFICITY</scope>
    <scope>MASS SPECTROMETRY</scope>
    <source>
        <tissue evidence="3">Skin secretion</tissue>
    </source>
</reference>
<dbReference type="EMBL" id="AJ320269">
    <property type="protein sequence ID" value="CAC44903.1"/>
    <property type="molecule type" value="mRNA"/>
</dbReference>
<dbReference type="GO" id="GO:0005576">
    <property type="term" value="C:extracellular region"/>
    <property type="evidence" value="ECO:0000314"/>
    <property type="project" value="UniProtKB"/>
</dbReference>
<dbReference type="GO" id="GO:0005179">
    <property type="term" value="F:hormone activity"/>
    <property type="evidence" value="ECO:0000303"/>
    <property type="project" value="UniProtKB"/>
</dbReference>
<dbReference type="GO" id="GO:0090729">
    <property type="term" value="F:toxin activity"/>
    <property type="evidence" value="ECO:0007669"/>
    <property type="project" value="UniProtKB-KW"/>
</dbReference>
<dbReference type="GO" id="GO:0006952">
    <property type="term" value="P:defense response"/>
    <property type="evidence" value="ECO:0000314"/>
    <property type="project" value="UniProtKB"/>
</dbReference>
<dbReference type="GO" id="GO:0045986">
    <property type="term" value="P:negative regulation of smooth muscle contraction"/>
    <property type="evidence" value="ECO:0000314"/>
    <property type="project" value="UniProtKB"/>
</dbReference>
<dbReference type="GO" id="GO:0045987">
    <property type="term" value="P:positive regulation of smooth muscle contraction"/>
    <property type="evidence" value="ECO:0000314"/>
    <property type="project" value="UniProtKB"/>
</dbReference>
<dbReference type="GO" id="GO:0050796">
    <property type="term" value="P:regulation of insulin secretion"/>
    <property type="evidence" value="ECO:0000314"/>
    <property type="project" value="UniProtKB"/>
</dbReference>
<dbReference type="GO" id="GO:0042311">
    <property type="term" value="P:vasodilation"/>
    <property type="evidence" value="ECO:0007669"/>
    <property type="project" value="UniProtKB-KW"/>
</dbReference>
<dbReference type="InterPro" id="IPR009608">
    <property type="entry name" value="Bradykinin"/>
</dbReference>
<dbReference type="Pfam" id="PF06753">
    <property type="entry name" value="Bradykinin"/>
    <property type="match status" value="1"/>
</dbReference>
<protein>
    <recommendedName>
        <fullName>Kininogen-1</fullName>
    </recommendedName>
    <alternativeName>
        <fullName>BVK-1</fullName>
    </alternativeName>
    <component>
        <recommendedName>
            <fullName>[Ala3,Thr6]-bradykinin</fullName>
        </recommendedName>
    </component>
    <component>
        <recommendedName>
            <fullName>Kininogen-1-associated peptide</fullName>
        </recommendedName>
    </component>
</protein>
<comment type="function">
    <text evidence="2 3">[Ala3,Thr6]bradykinin: produces in vitro relaxation of rat arterial smooth muscle and constriction of intestinal smooth muscle. Possesses insulin-releasing activity. May target bradykinin receptors (BDKRB).</text>
</comment>
<comment type="subcellular location">
    <subcellularLocation>
        <location evidence="2 3">Secreted</location>
    </subcellularLocation>
</comment>
<comment type="tissue specificity">
    <text evidence="2 3">Expressed by the skin glands.</text>
</comment>
<comment type="mass spectrometry">
    <molecule>[Ala3,Thr6]-bradykinin</molecule>
</comment>
<comment type="mass spectrometry">
    <molecule>Kininogen-1-associated peptide</molecule>
</comment>
<comment type="similarity">
    <text evidence="4">Belongs to the bradykinin-related peptide family.</text>
</comment>
<feature type="signal peptide" evidence="1">
    <location>
        <begin position="1"/>
        <end position="23"/>
    </location>
</feature>
<feature type="chain" id="PRO_0000003437" description="Kininogen-1" evidence="1">
    <location>
        <begin position="24"/>
        <end position="97"/>
    </location>
</feature>
<feature type="peptide" id="PRO_0000003438" description="[Ala3,Thr6]-bradykinin">
    <location>
        <begin position="51"/>
        <end position="59"/>
    </location>
</feature>
<feature type="peptide" id="PRO_0000003439" description="Kininogen-1-associated peptide">
    <location>
        <begin position="76"/>
        <end position="97"/>
    </location>
</feature>
<feature type="sequence conflict" description="In Ref. 2; AA sequence." evidence="4" ref="2">
    <original>CKK</original>
    <variation>AN</variation>
    <location>
        <begin position="95"/>
        <end position="97"/>
    </location>
</feature>
<name>BRK1_BOMVA</name>